<gene>
    <name evidence="1" type="primary">tatA</name>
    <name type="ordered locus">MRA_2109</name>
</gene>
<keyword id="KW-1003">Cell membrane</keyword>
<keyword id="KW-0472">Membrane</keyword>
<keyword id="KW-0653">Protein transport</keyword>
<keyword id="KW-1185">Reference proteome</keyword>
<keyword id="KW-0811">Translocation</keyword>
<keyword id="KW-0812">Transmembrane</keyword>
<keyword id="KW-1133">Transmembrane helix</keyword>
<keyword id="KW-0813">Transport</keyword>
<dbReference type="EMBL" id="CP000611">
    <property type="protein sequence ID" value="ABQ73870.1"/>
    <property type="molecule type" value="Genomic_DNA"/>
</dbReference>
<dbReference type="RefSeq" id="WP_003410768.1">
    <property type="nucleotide sequence ID" value="NZ_CP016972.1"/>
</dbReference>
<dbReference type="SMR" id="A5U4C0"/>
<dbReference type="GeneID" id="45426071"/>
<dbReference type="KEGG" id="mra:MRA_2109"/>
<dbReference type="eggNOG" id="COG1826">
    <property type="taxonomic scope" value="Bacteria"/>
</dbReference>
<dbReference type="HOGENOM" id="CLU_086034_4_2_11"/>
<dbReference type="Proteomes" id="UP000001988">
    <property type="component" value="Chromosome"/>
</dbReference>
<dbReference type="GO" id="GO:0033281">
    <property type="term" value="C:TAT protein transport complex"/>
    <property type="evidence" value="ECO:0007669"/>
    <property type="project" value="UniProtKB-UniRule"/>
</dbReference>
<dbReference type="GO" id="GO:0008320">
    <property type="term" value="F:protein transmembrane transporter activity"/>
    <property type="evidence" value="ECO:0007669"/>
    <property type="project" value="UniProtKB-UniRule"/>
</dbReference>
<dbReference type="GO" id="GO:0043953">
    <property type="term" value="P:protein transport by the Tat complex"/>
    <property type="evidence" value="ECO:0007669"/>
    <property type="project" value="UniProtKB-UniRule"/>
</dbReference>
<dbReference type="Gene3D" id="1.20.5.3310">
    <property type="match status" value="1"/>
</dbReference>
<dbReference type="HAMAP" id="MF_00236">
    <property type="entry name" value="TatA_E"/>
    <property type="match status" value="1"/>
</dbReference>
<dbReference type="InterPro" id="IPR003369">
    <property type="entry name" value="TatA/B/E"/>
</dbReference>
<dbReference type="InterPro" id="IPR006312">
    <property type="entry name" value="TatA/E"/>
</dbReference>
<dbReference type="NCBIfam" id="NF001854">
    <property type="entry name" value="PRK00575.1"/>
    <property type="match status" value="1"/>
</dbReference>
<dbReference type="NCBIfam" id="TIGR01411">
    <property type="entry name" value="tatAE"/>
    <property type="match status" value="1"/>
</dbReference>
<dbReference type="PANTHER" id="PTHR42982">
    <property type="entry name" value="SEC-INDEPENDENT PROTEIN TRANSLOCASE PROTEIN TATA"/>
    <property type="match status" value="1"/>
</dbReference>
<dbReference type="PANTHER" id="PTHR42982:SF8">
    <property type="entry name" value="SEC-INDEPENDENT PROTEIN TRANSLOCASE PROTEIN TATA"/>
    <property type="match status" value="1"/>
</dbReference>
<dbReference type="Pfam" id="PF02416">
    <property type="entry name" value="TatA_B_E"/>
    <property type="match status" value="1"/>
</dbReference>
<protein>
    <recommendedName>
        <fullName evidence="1">Sec-independent protein translocase protein TatA</fullName>
    </recommendedName>
</protein>
<evidence type="ECO:0000255" key="1">
    <source>
        <dbReference type="HAMAP-Rule" id="MF_00236"/>
    </source>
</evidence>
<evidence type="ECO:0000256" key="2">
    <source>
        <dbReference type="SAM" id="MobiDB-lite"/>
    </source>
</evidence>
<sequence length="83" mass="8941">MGSLSPWHWAILAVVVIVLFGAKKLPDAARSLGKSLRIFKSEVRELQNENKAEASIETPTPVQSQRVDPSAASGQDSTEARPA</sequence>
<organism>
    <name type="scientific">Mycobacterium tuberculosis (strain ATCC 25177 / H37Ra)</name>
    <dbReference type="NCBI Taxonomy" id="419947"/>
    <lineage>
        <taxon>Bacteria</taxon>
        <taxon>Bacillati</taxon>
        <taxon>Actinomycetota</taxon>
        <taxon>Actinomycetes</taxon>
        <taxon>Mycobacteriales</taxon>
        <taxon>Mycobacteriaceae</taxon>
        <taxon>Mycobacterium</taxon>
        <taxon>Mycobacterium tuberculosis complex</taxon>
    </lineage>
</organism>
<accession>A5U4C0</accession>
<proteinExistence type="inferred from homology"/>
<reference key="1">
    <citation type="journal article" date="2008" name="PLoS ONE">
        <title>Genetic basis of virulence attenuation revealed by comparative genomic analysis of Mycobacterium tuberculosis strain H37Ra versus H37Rv.</title>
        <authorList>
            <person name="Zheng H."/>
            <person name="Lu L."/>
            <person name="Wang B."/>
            <person name="Pu S."/>
            <person name="Zhang X."/>
            <person name="Zhu G."/>
            <person name="Shi W."/>
            <person name="Zhang L."/>
            <person name="Wang H."/>
            <person name="Wang S."/>
            <person name="Zhao G."/>
            <person name="Zhang Y."/>
        </authorList>
    </citation>
    <scope>NUCLEOTIDE SEQUENCE [LARGE SCALE GENOMIC DNA]</scope>
    <source>
        <strain>ATCC 25177 / H37Ra</strain>
    </source>
</reference>
<comment type="function">
    <text evidence="1">Part of the twin-arginine translocation (Tat) system that transports large folded proteins containing a characteristic twin-arginine motif in their signal peptide across membranes. TatA could form the protein-conducting channel of the Tat system.</text>
</comment>
<comment type="subunit">
    <text evidence="1">The Tat system comprises two distinct complexes: a TatABC complex, containing multiple copies of TatA, TatB and TatC subunits, and a separate TatA complex, containing only TatA subunits. Substrates initially bind to the TatABC complex, which probably triggers association of the separate TatA complex to form the active translocon.</text>
</comment>
<comment type="subcellular location">
    <subcellularLocation>
        <location evidence="1">Cell membrane</location>
        <topology evidence="1">Single-pass membrane protein</topology>
    </subcellularLocation>
</comment>
<comment type="similarity">
    <text evidence="1">Belongs to the TatA/E family.</text>
</comment>
<feature type="chain" id="PRO_1000044405" description="Sec-independent protein translocase protein TatA">
    <location>
        <begin position="1"/>
        <end position="83"/>
    </location>
</feature>
<feature type="transmembrane region" description="Helical" evidence="1">
    <location>
        <begin position="1"/>
        <end position="21"/>
    </location>
</feature>
<feature type="region of interest" description="Disordered" evidence="2">
    <location>
        <begin position="48"/>
        <end position="83"/>
    </location>
</feature>
<feature type="compositionally biased region" description="Polar residues" evidence="2">
    <location>
        <begin position="57"/>
        <end position="77"/>
    </location>
</feature>
<name>TATA_MYCTA</name>